<comment type="function">
    <text>Involved in oxygen transport from the lung to the various peripheral tissues.</text>
</comment>
<comment type="subunit">
    <text>Heterotetramer of two alpha chains and two beta chains.</text>
</comment>
<comment type="tissue specificity">
    <text>Red blood cells.</text>
</comment>
<comment type="similarity">
    <text evidence="1">Belongs to the globin family.</text>
</comment>
<feature type="chain" id="PRO_0000052856" description="Hemoglobin subunit beta">
    <location>
        <begin position="1"/>
        <end position="146"/>
    </location>
</feature>
<feature type="domain" description="Globin" evidence="1">
    <location>
        <begin position="2"/>
        <end position="146"/>
    </location>
</feature>
<feature type="binding site" description="distal binding residue">
    <location>
        <position position="63"/>
    </location>
    <ligand>
        <name>heme b</name>
        <dbReference type="ChEBI" id="CHEBI:60344"/>
    </ligand>
    <ligandPart>
        <name>Fe</name>
        <dbReference type="ChEBI" id="CHEBI:18248"/>
    </ligandPart>
</feature>
<feature type="binding site" description="proximal binding residue">
    <location>
        <position position="92"/>
    </location>
    <ligand>
        <name>heme b</name>
        <dbReference type="ChEBI" id="CHEBI:60344"/>
    </ligand>
    <ligandPart>
        <name>Fe</name>
        <dbReference type="ChEBI" id="CHEBI:18248"/>
    </ligandPart>
</feature>
<accession>P08851</accession>
<sequence length="146" mass="16140">VQWAAEEKQLITGLWGKVNVADCGAEALARLLIVYPWTQRFFASFGNLSSATAVLGNPMVRAHGKKVLTSFGEAVKNLDNIKNTFAQLSELHCDKLHVDPENFRLLGDILIVVLAAHFGKDFSPDCQAAWQKLVRAVAHALARKYH</sequence>
<evidence type="ECO:0000255" key="1">
    <source>
        <dbReference type="PROSITE-ProRule" id="PRU00238"/>
    </source>
</evidence>
<reference key="1">
    <citation type="journal article" date="1987" name="Biol. Chem. Hoppe-Seyler">
        <title>High-altitude respiration of birds. The primary structures of the major and minor hemoglobin component of adult goshawk (Accipiter gentilis, Accipitrinae).</title>
        <authorList>
            <person name="Hiebl I."/>
            <person name="Kosters J."/>
            <person name="Braunitzer G."/>
        </authorList>
    </citation>
    <scope>PROTEIN SEQUENCE</scope>
</reference>
<dbReference type="PIR" id="C26544">
    <property type="entry name" value="C26544"/>
</dbReference>
<dbReference type="SMR" id="P08851"/>
<dbReference type="GO" id="GO:0072562">
    <property type="term" value="C:blood microparticle"/>
    <property type="evidence" value="ECO:0007669"/>
    <property type="project" value="TreeGrafter"/>
</dbReference>
<dbReference type="GO" id="GO:0031838">
    <property type="term" value="C:haptoglobin-hemoglobin complex"/>
    <property type="evidence" value="ECO:0007669"/>
    <property type="project" value="TreeGrafter"/>
</dbReference>
<dbReference type="GO" id="GO:0005833">
    <property type="term" value="C:hemoglobin complex"/>
    <property type="evidence" value="ECO:0007669"/>
    <property type="project" value="InterPro"/>
</dbReference>
<dbReference type="GO" id="GO:0031720">
    <property type="term" value="F:haptoglobin binding"/>
    <property type="evidence" value="ECO:0007669"/>
    <property type="project" value="TreeGrafter"/>
</dbReference>
<dbReference type="GO" id="GO:0020037">
    <property type="term" value="F:heme binding"/>
    <property type="evidence" value="ECO:0007669"/>
    <property type="project" value="InterPro"/>
</dbReference>
<dbReference type="GO" id="GO:0046872">
    <property type="term" value="F:metal ion binding"/>
    <property type="evidence" value="ECO:0007669"/>
    <property type="project" value="UniProtKB-KW"/>
</dbReference>
<dbReference type="GO" id="GO:0043177">
    <property type="term" value="F:organic acid binding"/>
    <property type="evidence" value="ECO:0007669"/>
    <property type="project" value="TreeGrafter"/>
</dbReference>
<dbReference type="GO" id="GO:0019825">
    <property type="term" value="F:oxygen binding"/>
    <property type="evidence" value="ECO:0007669"/>
    <property type="project" value="InterPro"/>
</dbReference>
<dbReference type="GO" id="GO:0005344">
    <property type="term" value="F:oxygen carrier activity"/>
    <property type="evidence" value="ECO:0007669"/>
    <property type="project" value="UniProtKB-KW"/>
</dbReference>
<dbReference type="GO" id="GO:0004601">
    <property type="term" value="F:peroxidase activity"/>
    <property type="evidence" value="ECO:0007669"/>
    <property type="project" value="TreeGrafter"/>
</dbReference>
<dbReference type="GO" id="GO:0042744">
    <property type="term" value="P:hydrogen peroxide catabolic process"/>
    <property type="evidence" value="ECO:0007669"/>
    <property type="project" value="TreeGrafter"/>
</dbReference>
<dbReference type="CDD" id="cd08925">
    <property type="entry name" value="Hb-beta-like"/>
    <property type="match status" value="1"/>
</dbReference>
<dbReference type="FunFam" id="1.10.490.10:FF:000001">
    <property type="entry name" value="Hemoglobin subunit beta"/>
    <property type="match status" value="1"/>
</dbReference>
<dbReference type="Gene3D" id="1.10.490.10">
    <property type="entry name" value="Globins"/>
    <property type="match status" value="1"/>
</dbReference>
<dbReference type="InterPro" id="IPR000971">
    <property type="entry name" value="Globin"/>
</dbReference>
<dbReference type="InterPro" id="IPR009050">
    <property type="entry name" value="Globin-like_sf"/>
</dbReference>
<dbReference type="InterPro" id="IPR012292">
    <property type="entry name" value="Globin/Proto"/>
</dbReference>
<dbReference type="InterPro" id="IPR002337">
    <property type="entry name" value="Hemoglobin_b"/>
</dbReference>
<dbReference type="InterPro" id="IPR050056">
    <property type="entry name" value="Hemoglobin_oxygen_transport"/>
</dbReference>
<dbReference type="PANTHER" id="PTHR11442">
    <property type="entry name" value="HEMOGLOBIN FAMILY MEMBER"/>
    <property type="match status" value="1"/>
</dbReference>
<dbReference type="PANTHER" id="PTHR11442:SF7">
    <property type="entry name" value="HEMOGLOBIN SUBUNIT EPSILON"/>
    <property type="match status" value="1"/>
</dbReference>
<dbReference type="Pfam" id="PF00042">
    <property type="entry name" value="Globin"/>
    <property type="match status" value="1"/>
</dbReference>
<dbReference type="PRINTS" id="PR00814">
    <property type="entry name" value="BETAHAEM"/>
</dbReference>
<dbReference type="SUPFAM" id="SSF46458">
    <property type="entry name" value="Globin-like"/>
    <property type="match status" value="1"/>
</dbReference>
<dbReference type="PROSITE" id="PS01033">
    <property type="entry name" value="GLOBIN"/>
    <property type="match status" value="1"/>
</dbReference>
<organism>
    <name type="scientific">Accipiter gentilis</name>
    <name type="common">Northern goshawk</name>
    <name type="synonym">Falco gentilis</name>
    <dbReference type="NCBI Taxonomy" id="8957"/>
    <lineage>
        <taxon>Eukaryota</taxon>
        <taxon>Metazoa</taxon>
        <taxon>Chordata</taxon>
        <taxon>Craniata</taxon>
        <taxon>Vertebrata</taxon>
        <taxon>Euteleostomi</taxon>
        <taxon>Archelosauria</taxon>
        <taxon>Archosauria</taxon>
        <taxon>Dinosauria</taxon>
        <taxon>Saurischia</taxon>
        <taxon>Theropoda</taxon>
        <taxon>Coelurosauria</taxon>
        <taxon>Aves</taxon>
        <taxon>Neognathae</taxon>
        <taxon>Neoaves</taxon>
        <taxon>Telluraves</taxon>
        <taxon>Accipitrimorphae</taxon>
        <taxon>Accipitriformes</taxon>
        <taxon>Accipitridae</taxon>
        <taxon>Accipitrinae</taxon>
        <taxon>Astur</taxon>
    </lineage>
</organism>
<name>HBB_ACCGE</name>
<protein>
    <recommendedName>
        <fullName>Hemoglobin subunit beta</fullName>
    </recommendedName>
    <alternativeName>
        <fullName>Beta-globin</fullName>
    </alternativeName>
    <alternativeName>
        <fullName>Hemoglobin beta chain</fullName>
    </alternativeName>
</protein>
<proteinExistence type="evidence at protein level"/>
<gene>
    <name type="primary">HBB</name>
</gene>
<keyword id="KW-0903">Direct protein sequencing</keyword>
<keyword id="KW-0349">Heme</keyword>
<keyword id="KW-0408">Iron</keyword>
<keyword id="KW-0479">Metal-binding</keyword>
<keyword id="KW-0561">Oxygen transport</keyword>
<keyword id="KW-0813">Transport</keyword>